<feature type="chain" id="PRO_0000074559" description="Probable glucosamine 6-phosphate N-acetyltransferase">
    <location>
        <begin position="1"/>
        <end position="148"/>
    </location>
</feature>
<feature type="domain" description="N-acetyltransferase" evidence="3">
    <location>
        <begin position="3"/>
        <end position="148"/>
    </location>
</feature>
<feature type="binding site" evidence="1">
    <location>
        <position position="25"/>
    </location>
    <ligand>
        <name>substrate</name>
    </ligand>
</feature>
<feature type="binding site" evidence="1">
    <location>
        <begin position="72"/>
        <end position="75"/>
    </location>
    <ligand>
        <name>substrate</name>
    </ligand>
</feature>
<feature type="binding site" evidence="1">
    <location>
        <begin position="84"/>
        <end position="86"/>
    </location>
    <ligand>
        <name>substrate</name>
    </ligand>
</feature>
<feature type="binding site" evidence="1">
    <location>
        <begin position="86"/>
        <end position="88"/>
    </location>
    <ligand>
        <name>acetyl-CoA</name>
        <dbReference type="ChEBI" id="CHEBI:57288"/>
    </ligand>
</feature>
<feature type="binding site" evidence="2">
    <location>
        <begin position="94"/>
        <end position="99"/>
    </location>
    <ligand>
        <name>acetyl-CoA</name>
        <dbReference type="ChEBI" id="CHEBI:57288"/>
    </ligand>
</feature>
<feature type="binding site" evidence="1">
    <location>
        <begin position="115"/>
        <end position="116"/>
    </location>
    <ligand>
        <name>substrate</name>
    </ligand>
</feature>
<feature type="binding site" evidence="1">
    <location>
        <position position="120"/>
    </location>
    <ligand>
        <name>substrate</name>
    </ligand>
</feature>
<feature type="binding site" evidence="1">
    <location>
        <begin position="129"/>
        <end position="131"/>
    </location>
    <ligand>
        <name>acetyl-CoA</name>
        <dbReference type="ChEBI" id="CHEBI:57288"/>
    </ligand>
</feature>
<feature type="binding site" evidence="2">
    <location>
        <position position="138"/>
    </location>
    <ligand>
        <name>substrate</name>
    </ligand>
</feature>
<comment type="catalytic activity">
    <reaction evidence="2">
        <text>D-glucosamine 6-phosphate + acetyl-CoA = N-acetyl-D-glucosamine 6-phosphate + CoA + H(+)</text>
        <dbReference type="Rhea" id="RHEA:10292"/>
        <dbReference type="ChEBI" id="CHEBI:15378"/>
        <dbReference type="ChEBI" id="CHEBI:57287"/>
        <dbReference type="ChEBI" id="CHEBI:57288"/>
        <dbReference type="ChEBI" id="CHEBI:57513"/>
        <dbReference type="ChEBI" id="CHEBI:58725"/>
        <dbReference type="EC" id="2.3.1.4"/>
    </reaction>
</comment>
<comment type="pathway">
    <text>Nucleotide-sugar biosynthesis; UDP-N-acetyl-alpha-D-glucosamine biosynthesis; N-acetyl-alpha-D-glucosamine 1-phosphate from alpha-D-glucosamine 6-phosphate (route I): step 1/2.</text>
</comment>
<comment type="similarity">
    <text evidence="4">Belongs to the acetyltransferase family. GNA1 subfamily.</text>
</comment>
<organismHost>
    <name type="scientific">Acanthamoeba polyphaga</name>
    <name type="common">Amoeba</name>
    <dbReference type="NCBI Taxonomy" id="5757"/>
</organismHost>
<evidence type="ECO:0000250" key="1">
    <source>
        <dbReference type="UniProtKB" id="P43577"/>
    </source>
</evidence>
<evidence type="ECO:0000250" key="2">
    <source>
        <dbReference type="UniProtKB" id="Q96EK6"/>
    </source>
</evidence>
<evidence type="ECO:0000255" key="3">
    <source>
        <dbReference type="PROSITE-ProRule" id="PRU00532"/>
    </source>
</evidence>
<evidence type="ECO:0000305" key="4"/>
<reference key="1">
    <citation type="journal article" date="2004" name="Science">
        <title>The 1.2-megabase genome sequence of Mimivirus.</title>
        <authorList>
            <person name="Raoult D."/>
            <person name="Audic S."/>
            <person name="Robert C."/>
            <person name="Abergel C."/>
            <person name="Renesto P."/>
            <person name="Ogata H."/>
            <person name="La Scola B."/>
            <person name="Susan M."/>
            <person name="Claverie J.-M."/>
        </authorList>
    </citation>
    <scope>NUCLEOTIDE SEQUENCE [LARGE SCALE GENOMIC DNA]</scope>
    <source>
        <strain>Rowbotham-Bradford</strain>
    </source>
</reference>
<name>GNA1_MIMIV</name>
<sequence length="148" mass="17017">MQISINELNFDDDSYQYMELLKQLTYIDPSIITNEMFEKQLSIIKNNPFHKIIVAKIDGKIVGSTTVLIEPKFIHNLSSVGHIEDVVVDQNYRLHGIGKLLIVKAIDICRQERCYKIILDCSDKVCGFYCKLGFTPKEKQMALYLNGK</sequence>
<accession>Q5UPZ9</accession>
<organism>
    <name type="scientific">Acanthamoeba polyphaga mimivirus</name>
    <name type="common">APMV</name>
    <dbReference type="NCBI Taxonomy" id="212035"/>
    <lineage>
        <taxon>Viruses</taxon>
        <taxon>Varidnaviria</taxon>
        <taxon>Bamfordvirae</taxon>
        <taxon>Nucleocytoviricota</taxon>
        <taxon>Megaviricetes</taxon>
        <taxon>Imitervirales</taxon>
        <taxon>Mimiviridae</taxon>
        <taxon>Megamimivirinae</taxon>
        <taxon>Mimivirus</taxon>
        <taxon>Mimivirus bradfordmassiliense</taxon>
    </lineage>
</organism>
<dbReference type="EC" id="2.3.1.4" evidence="2"/>
<dbReference type="EMBL" id="AY653733">
    <property type="protein sequence ID" value="AAV50586.1"/>
    <property type="molecule type" value="Genomic_DNA"/>
</dbReference>
<dbReference type="SMR" id="Q5UPZ9"/>
<dbReference type="KEGG" id="vg:9924933"/>
<dbReference type="OrthoDB" id="22262at10239"/>
<dbReference type="UniPathway" id="UPA00113">
    <property type="reaction ID" value="UER00529"/>
</dbReference>
<dbReference type="Proteomes" id="UP000001134">
    <property type="component" value="Genome"/>
</dbReference>
<dbReference type="GO" id="GO:0004343">
    <property type="term" value="F:glucosamine 6-phosphate N-acetyltransferase activity"/>
    <property type="evidence" value="ECO:0007669"/>
    <property type="project" value="UniProtKB-EC"/>
</dbReference>
<dbReference type="GO" id="GO:0006048">
    <property type="term" value="P:UDP-N-acetylglucosamine biosynthetic process"/>
    <property type="evidence" value="ECO:0007669"/>
    <property type="project" value="UniProtKB-UniPathway"/>
</dbReference>
<dbReference type="CDD" id="cd04301">
    <property type="entry name" value="NAT_SF"/>
    <property type="match status" value="1"/>
</dbReference>
<dbReference type="FunFam" id="3.40.630.30:FF:000105">
    <property type="entry name" value="Glucosamine 6-phosphate N-acetyltransferase"/>
    <property type="match status" value="1"/>
</dbReference>
<dbReference type="Gene3D" id="3.40.630.30">
    <property type="match status" value="1"/>
</dbReference>
<dbReference type="InterPro" id="IPR016181">
    <property type="entry name" value="Acyl_CoA_acyltransferase"/>
</dbReference>
<dbReference type="InterPro" id="IPR000182">
    <property type="entry name" value="GNAT_dom"/>
</dbReference>
<dbReference type="InterPro" id="IPR039143">
    <property type="entry name" value="GNPNAT1-like"/>
</dbReference>
<dbReference type="PANTHER" id="PTHR13355">
    <property type="entry name" value="GLUCOSAMINE 6-PHOSPHATE N-ACETYLTRANSFERASE"/>
    <property type="match status" value="1"/>
</dbReference>
<dbReference type="PANTHER" id="PTHR13355:SF11">
    <property type="entry name" value="GLUCOSAMINE 6-PHOSPHATE N-ACETYLTRANSFERASE"/>
    <property type="match status" value="1"/>
</dbReference>
<dbReference type="Pfam" id="PF00583">
    <property type="entry name" value="Acetyltransf_1"/>
    <property type="match status" value="1"/>
</dbReference>
<dbReference type="SUPFAM" id="SSF55729">
    <property type="entry name" value="Acyl-CoA N-acyltransferases (Nat)"/>
    <property type="match status" value="1"/>
</dbReference>
<dbReference type="PROSITE" id="PS51186">
    <property type="entry name" value="GNAT"/>
    <property type="match status" value="1"/>
</dbReference>
<keyword id="KW-0012">Acyltransferase</keyword>
<keyword id="KW-1185">Reference proteome</keyword>
<keyword id="KW-0808">Transferase</keyword>
<protein>
    <recommendedName>
        <fullName>Probable glucosamine 6-phosphate N-acetyltransferase</fullName>
        <ecNumber evidence="2">2.3.1.4</ecNumber>
    </recommendedName>
    <alternativeName>
        <fullName>Phosphoglucosamine acetylase</fullName>
    </alternativeName>
    <alternativeName>
        <fullName>Phosphoglucosamine transacetylase</fullName>
    </alternativeName>
</protein>
<proteinExistence type="inferred from homology"/>
<gene>
    <name type="ordered locus">MIMI_L316</name>
</gene>